<gene>
    <name evidence="1" type="primary">glpB</name>
    <name type="ordered locus">SNSL254_A2470</name>
</gene>
<organism>
    <name type="scientific">Salmonella newport (strain SL254)</name>
    <dbReference type="NCBI Taxonomy" id="423368"/>
    <lineage>
        <taxon>Bacteria</taxon>
        <taxon>Pseudomonadati</taxon>
        <taxon>Pseudomonadota</taxon>
        <taxon>Gammaproteobacteria</taxon>
        <taxon>Enterobacterales</taxon>
        <taxon>Enterobacteriaceae</taxon>
        <taxon>Salmonella</taxon>
    </lineage>
</organism>
<name>GLPB_SALNS</name>
<feature type="chain" id="PRO_1000133372" description="Anaerobic glycerol-3-phosphate dehydrogenase subunit B">
    <location>
        <begin position="1"/>
        <end position="419"/>
    </location>
</feature>
<sequence>MKFDTVIMGGGLAGLLCGLQLQQHGLRCAIVTRGQSALHFSSGSLDLLSALPDGQPVTDITAGLDALCRQAPEHPYSRLGAQKVLTLAQQAQTLLNASGAQLYGDVQQAHQRVTPLGTLRSTWLSSPEVPVWPLSAQRICVVGVSGLLDFQAHLAAASLRQRDLNVETAEIDLPELDVLRDNPTEFRAVNIARLLDNEEKWPLLYDALSPIATNCDMIIMPACFGLANDTLWRWLNERLPCALTLLPTLPPSVLGIRLHNQLQRQFVRQGGIWMPGDEVKKVTCRRGTVSEIWTRNHADIPLRPRFAVLASGSFFSSGLVAEREGIREPILGLDVQQTATRAEWYQQHFFDPQPWQQFGVVTDDAFRPSLAGNTVENLYAIGSVLAGFDPIAEGCGGGVCAVSALQAAHHIAERAGEQQ</sequence>
<protein>
    <recommendedName>
        <fullName evidence="1">Anaerobic glycerol-3-phosphate dehydrogenase subunit B</fullName>
        <shortName evidence="1">Anaerobic G-3-P dehydrogenase subunit B</shortName>
        <shortName evidence="1">Anaerobic G3Pdhase B</shortName>
        <ecNumber evidence="1">1.1.5.3</ecNumber>
    </recommendedName>
</protein>
<dbReference type="EC" id="1.1.5.3" evidence="1"/>
<dbReference type="EMBL" id="CP001113">
    <property type="protein sequence ID" value="ACF61749.1"/>
    <property type="molecule type" value="Genomic_DNA"/>
</dbReference>
<dbReference type="RefSeq" id="WP_000667146.1">
    <property type="nucleotide sequence ID" value="NZ_CCMR01000001.1"/>
</dbReference>
<dbReference type="KEGG" id="see:SNSL254_A2470"/>
<dbReference type="HOGENOM" id="CLU_047793_0_0_6"/>
<dbReference type="UniPathway" id="UPA00618">
    <property type="reaction ID" value="UER00673"/>
</dbReference>
<dbReference type="Proteomes" id="UP000008824">
    <property type="component" value="Chromosome"/>
</dbReference>
<dbReference type="GO" id="GO:0009331">
    <property type="term" value="C:glycerol-3-phosphate dehydrogenase (FAD) complex"/>
    <property type="evidence" value="ECO:0007669"/>
    <property type="project" value="InterPro"/>
</dbReference>
<dbReference type="GO" id="GO:0004368">
    <property type="term" value="F:glycerol-3-phosphate dehydrogenase (quinone) activity"/>
    <property type="evidence" value="ECO:0007669"/>
    <property type="project" value="UniProtKB-UniRule"/>
</dbReference>
<dbReference type="GO" id="GO:0009061">
    <property type="term" value="P:anaerobic respiration"/>
    <property type="evidence" value="ECO:0007669"/>
    <property type="project" value="TreeGrafter"/>
</dbReference>
<dbReference type="GO" id="GO:0019563">
    <property type="term" value="P:glycerol catabolic process"/>
    <property type="evidence" value="ECO:0007669"/>
    <property type="project" value="UniProtKB-UniRule"/>
</dbReference>
<dbReference type="GO" id="GO:0046168">
    <property type="term" value="P:glycerol-3-phosphate catabolic process"/>
    <property type="evidence" value="ECO:0007669"/>
    <property type="project" value="TreeGrafter"/>
</dbReference>
<dbReference type="FunFam" id="3.50.50.60:FF:000125">
    <property type="entry name" value="Anaerobic glycerol-3-phosphate dehydrogenase subunit B"/>
    <property type="match status" value="1"/>
</dbReference>
<dbReference type="Gene3D" id="3.50.50.60">
    <property type="entry name" value="FAD/NAD(P)-binding domain"/>
    <property type="match status" value="1"/>
</dbReference>
<dbReference type="HAMAP" id="MF_00753">
    <property type="entry name" value="Glycerol3P_GlpB"/>
    <property type="match status" value="1"/>
</dbReference>
<dbReference type="InterPro" id="IPR003953">
    <property type="entry name" value="FAD-dep_OxRdtase_2_FAD-bd"/>
</dbReference>
<dbReference type="InterPro" id="IPR050315">
    <property type="entry name" value="FAD-oxidoreductase_2"/>
</dbReference>
<dbReference type="InterPro" id="IPR036188">
    <property type="entry name" value="FAD/NAD-bd_sf"/>
</dbReference>
<dbReference type="InterPro" id="IPR009158">
    <property type="entry name" value="G3P_DH_GlpB_su"/>
</dbReference>
<dbReference type="NCBIfam" id="TIGR03378">
    <property type="entry name" value="glycerol3P_GlpB"/>
    <property type="match status" value="1"/>
</dbReference>
<dbReference type="NCBIfam" id="NF003718">
    <property type="entry name" value="PRK05329.1-1"/>
    <property type="match status" value="1"/>
</dbReference>
<dbReference type="NCBIfam" id="NF003719">
    <property type="entry name" value="PRK05329.1-2"/>
    <property type="match status" value="1"/>
</dbReference>
<dbReference type="NCBIfam" id="NF003720">
    <property type="entry name" value="PRK05329.1-3"/>
    <property type="match status" value="1"/>
</dbReference>
<dbReference type="PANTHER" id="PTHR43400:SF11">
    <property type="entry name" value="ANAEROBIC GLYCEROL-3-PHOSPHATE DEHYDROGENASE SUBUNIT B"/>
    <property type="match status" value="1"/>
</dbReference>
<dbReference type="PANTHER" id="PTHR43400">
    <property type="entry name" value="FUMARATE REDUCTASE"/>
    <property type="match status" value="1"/>
</dbReference>
<dbReference type="Pfam" id="PF00890">
    <property type="entry name" value="FAD_binding_2"/>
    <property type="match status" value="1"/>
</dbReference>
<dbReference type="PIRSF" id="PIRSF000141">
    <property type="entry name" value="Anaerobic_G3P_dh"/>
    <property type="match status" value="1"/>
</dbReference>
<dbReference type="SUPFAM" id="SSF51905">
    <property type="entry name" value="FAD/NAD(P)-binding domain"/>
    <property type="match status" value="1"/>
</dbReference>
<reference key="1">
    <citation type="journal article" date="2011" name="J. Bacteriol.">
        <title>Comparative genomics of 28 Salmonella enterica isolates: evidence for CRISPR-mediated adaptive sublineage evolution.</title>
        <authorList>
            <person name="Fricke W.F."/>
            <person name="Mammel M.K."/>
            <person name="McDermott P.F."/>
            <person name="Tartera C."/>
            <person name="White D.G."/>
            <person name="Leclerc J.E."/>
            <person name="Ravel J."/>
            <person name="Cebula T.A."/>
        </authorList>
    </citation>
    <scope>NUCLEOTIDE SEQUENCE [LARGE SCALE GENOMIC DNA]</scope>
    <source>
        <strain>SL254</strain>
    </source>
</reference>
<comment type="function">
    <text evidence="1">Conversion of glycerol 3-phosphate to dihydroxyacetone. Uses fumarate or nitrate as electron acceptor.</text>
</comment>
<comment type="catalytic activity">
    <reaction evidence="1">
        <text>a quinone + sn-glycerol 3-phosphate = dihydroxyacetone phosphate + a quinol</text>
        <dbReference type="Rhea" id="RHEA:18977"/>
        <dbReference type="ChEBI" id="CHEBI:24646"/>
        <dbReference type="ChEBI" id="CHEBI:57597"/>
        <dbReference type="ChEBI" id="CHEBI:57642"/>
        <dbReference type="ChEBI" id="CHEBI:132124"/>
        <dbReference type="EC" id="1.1.5.3"/>
    </reaction>
</comment>
<comment type="cofactor">
    <cofactor evidence="1">
        <name>FMN</name>
        <dbReference type="ChEBI" id="CHEBI:58210"/>
    </cofactor>
</comment>
<comment type="pathway">
    <text evidence="1">Polyol metabolism; glycerol degradation via glycerol kinase pathway; glycerone phosphate from sn-glycerol 3-phosphate (anaerobic route): step 1/1.</text>
</comment>
<comment type="subunit">
    <text evidence="1">Composed of a catalytic GlpA/B dimer and of membrane bound GlpC.</text>
</comment>
<comment type="similarity">
    <text evidence="1">Belongs to the anaerobic G-3-P dehydrogenase subunit B family.</text>
</comment>
<keyword id="KW-0285">Flavoprotein</keyword>
<keyword id="KW-0288">FMN</keyword>
<keyword id="KW-0560">Oxidoreductase</keyword>
<accession>B4SYV7</accession>
<proteinExistence type="inferred from homology"/>
<evidence type="ECO:0000255" key="1">
    <source>
        <dbReference type="HAMAP-Rule" id="MF_00753"/>
    </source>
</evidence>